<proteinExistence type="inferred from homology"/>
<feature type="chain" id="PRO_0000173370" description="Quinolone resistance protein NorA">
    <location>
        <begin position="1"/>
        <end position="388"/>
    </location>
</feature>
<feature type="transmembrane region" description="Helical" evidence="2">
    <location>
        <begin position="5"/>
        <end position="25"/>
    </location>
</feature>
<feature type="transmembrane region" description="Helical" evidence="2">
    <location>
        <begin position="42"/>
        <end position="62"/>
    </location>
</feature>
<feature type="transmembrane region" description="Helical" evidence="2">
    <location>
        <begin position="69"/>
        <end position="89"/>
    </location>
</feature>
<feature type="transmembrane region" description="Helical" evidence="2">
    <location>
        <begin position="99"/>
        <end position="119"/>
    </location>
</feature>
<feature type="transmembrane region" description="Helical" evidence="2">
    <location>
        <begin position="129"/>
        <end position="149"/>
    </location>
</feature>
<feature type="transmembrane region" description="Helical" evidence="2">
    <location>
        <begin position="157"/>
        <end position="177"/>
    </location>
</feature>
<feature type="transmembrane region" description="Helical" evidence="2">
    <location>
        <begin position="201"/>
        <end position="221"/>
    </location>
</feature>
<feature type="transmembrane region" description="Helical" evidence="2">
    <location>
        <begin position="239"/>
        <end position="259"/>
    </location>
</feature>
<feature type="transmembrane region" description="Helical" evidence="2">
    <location>
        <begin position="269"/>
        <end position="289"/>
    </location>
</feature>
<feature type="transmembrane region" description="Helical" evidence="2">
    <location>
        <begin position="293"/>
        <end position="313"/>
    </location>
</feature>
<feature type="transmembrane region" description="Helical" evidence="2">
    <location>
        <begin position="331"/>
        <end position="351"/>
    </location>
</feature>
<feature type="transmembrane region" description="Helical" evidence="2">
    <location>
        <begin position="355"/>
        <end position="375"/>
    </location>
</feature>
<name>NORA_STAAN</name>
<dbReference type="EMBL" id="BA000018">
    <property type="protein sequence ID" value="BAB41883.1"/>
    <property type="molecule type" value="Genomic_DNA"/>
</dbReference>
<dbReference type="RefSeq" id="WP_001041274.1">
    <property type="nucleotide sequence ID" value="NC_002745.2"/>
</dbReference>
<dbReference type="SMR" id="P0A0J5"/>
<dbReference type="EnsemblBacteria" id="BAB41883">
    <property type="protein sequence ID" value="BAB41883"/>
    <property type="gene ID" value="BAB41883"/>
</dbReference>
<dbReference type="KEGG" id="sau:SA0650"/>
<dbReference type="HOGENOM" id="CLU_001265_10_11_9"/>
<dbReference type="GO" id="GO:0005886">
    <property type="term" value="C:plasma membrane"/>
    <property type="evidence" value="ECO:0007669"/>
    <property type="project" value="UniProtKB-SubCell"/>
</dbReference>
<dbReference type="GO" id="GO:0042910">
    <property type="term" value="F:xenobiotic transmembrane transporter activity"/>
    <property type="evidence" value="ECO:0007669"/>
    <property type="project" value="InterPro"/>
</dbReference>
<dbReference type="CDD" id="cd17325">
    <property type="entry name" value="MFS_MdtG_SLC18_like"/>
    <property type="match status" value="1"/>
</dbReference>
<dbReference type="Gene3D" id="1.20.1250.20">
    <property type="entry name" value="MFS general substrate transporter like domains"/>
    <property type="match status" value="1"/>
</dbReference>
<dbReference type="InterPro" id="IPR011701">
    <property type="entry name" value="MFS"/>
</dbReference>
<dbReference type="InterPro" id="IPR020846">
    <property type="entry name" value="MFS_dom"/>
</dbReference>
<dbReference type="InterPro" id="IPR050189">
    <property type="entry name" value="MFS_Efflux_Transporters"/>
</dbReference>
<dbReference type="InterPro" id="IPR036259">
    <property type="entry name" value="MFS_trans_sf"/>
</dbReference>
<dbReference type="InterPro" id="IPR004734">
    <property type="entry name" value="Multidrug-R"/>
</dbReference>
<dbReference type="InterPro" id="IPR001958">
    <property type="entry name" value="Tet-R_TetA/multi-R_MdtG-like"/>
</dbReference>
<dbReference type="NCBIfam" id="TIGR00880">
    <property type="entry name" value="2_A_01_02"/>
    <property type="match status" value="1"/>
</dbReference>
<dbReference type="PANTHER" id="PTHR43124:SF3">
    <property type="entry name" value="CHLORAMPHENICOL EFFLUX PUMP RV0191"/>
    <property type="match status" value="1"/>
</dbReference>
<dbReference type="PANTHER" id="PTHR43124">
    <property type="entry name" value="PURINE EFFLUX PUMP PBUE"/>
    <property type="match status" value="1"/>
</dbReference>
<dbReference type="Pfam" id="PF07690">
    <property type="entry name" value="MFS_1"/>
    <property type="match status" value="1"/>
</dbReference>
<dbReference type="PRINTS" id="PR01035">
    <property type="entry name" value="TCRTETA"/>
</dbReference>
<dbReference type="SUPFAM" id="SSF103473">
    <property type="entry name" value="MFS general substrate transporter"/>
    <property type="match status" value="1"/>
</dbReference>
<dbReference type="PROSITE" id="PS50850">
    <property type="entry name" value="MFS"/>
    <property type="match status" value="1"/>
</dbReference>
<reference key="1">
    <citation type="journal article" date="2001" name="Lancet">
        <title>Whole genome sequencing of meticillin-resistant Staphylococcus aureus.</title>
        <authorList>
            <person name="Kuroda M."/>
            <person name="Ohta T."/>
            <person name="Uchiyama I."/>
            <person name="Baba T."/>
            <person name="Yuzawa H."/>
            <person name="Kobayashi I."/>
            <person name="Cui L."/>
            <person name="Oguchi A."/>
            <person name="Aoki K."/>
            <person name="Nagai Y."/>
            <person name="Lian J.-Q."/>
            <person name="Ito T."/>
            <person name="Kanamori M."/>
            <person name="Matsumaru H."/>
            <person name="Maruyama A."/>
            <person name="Murakami H."/>
            <person name="Hosoyama A."/>
            <person name="Mizutani-Ui Y."/>
            <person name="Takahashi N.K."/>
            <person name="Sawano T."/>
            <person name="Inoue R."/>
            <person name="Kaito C."/>
            <person name="Sekimizu K."/>
            <person name="Hirakawa H."/>
            <person name="Kuhara S."/>
            <person name="Goto S."/>
            <person name="Yabuzaki J."/>
            <person name="Kanehisa M."/>
            <person name="Yamashita A."/>
            <person name="Oshima K."/>
            <person name="Furuya K."/>
            <person name="Yoshino C."/>
            <person name="Shiba T."/>
            <person name="Hattori M."/>
            <person name="Ogasawara N."/>
            <person name="Hayashi H."/>
            <person name="Hiramatsu K."/>
        </authorList>
    </citation>
    <scope>NUCLEOTIDE SEQUENCE [LARGE SCALE GENOMIC DNA]</scope>
    <source>
        <strain>N315</strain>
    </source>
</reference>
<evidence type="ECO:0000250" key="1"/>
<evidence type="ECO:0000255" key="2"/>
<evidence type="ECO:0000305" key="3"/>
<protein>
    <recommendedName>
        <fullName>Quinolone resistance protein NorA</fullName>
    </recommendedName>
</protein>
<gene>
    <name type="primary">norA</name>
    <name type="ordered locus">SA0650</name>
</gene>
<organism>
    <name type="scientific">Staphylococcus aureus (strain N315)</name>
    <dbReference type="NCBI Taxonomy" id="158879"/>
    <lineage>
        <taxon>Bacteria</taxon>
        <taxon>Bacillati</taxon>
        <taxon>Bacillota</taxon>
        <taxon>Bacilli</taxon>
        <taxon>Bacillales</taxon>
        <taxon>Staphylococcaceae</taxon>
        <taxon>Staphylococcus</taxon>
    </lineage>
</organism>
<comment type="function">
    <text evidence="1">Involved in quinolone resistance. May constitute a membrane-associated active efflux pump of hydrophilic quinolones (By similarity).</text>
</comment>
<comment type="subcellular location">
    <subcellularLocation>
        <location evidence="3">Cell membrane</location>
        <topology evidence="3">Multi-pass membrane protein</topology>
    </subcellularLocation>
</comment>
<comment type="similarity">
    <text evidence="3">Belongs to the major facilitator superfamily. TCR/Tet family.</text>
</comment>
<sequence>MNKQIFVLYFNIFLIFLGIGLVIPVLPVYLKDLGLTGSDLGLLVAAFALSQMIISPFGGTLADKLGKKLIICIGLILFSVSEFMFAVGHNFSVLMLSRVIGGMSAGMVMPGVTGLIADISPSHQKAKNFGYMSAIINSGFILGPGIGGFMAEVSHRMPFYFAGALGILAFIMSIVLIHDPKKSTTSGFQKLEPQLLTKINWKVFITPVILTLVLSFGLSAFETLYSLYTADKVNYSPKDISIAITGGGIFGALFQIYFFDKFMKYFSELTFIAWSLLYSVVVLILLVFANGYWSIMLISFVVFIGFDMIRPAITNYFSNIAGERQGFAGGLNSTFTSMGNFIGPLIAGALFDVHIEAPIYMAIGVSLAGVVIVLIEKQHRAKLKEQNM</sequence>
<accession>P0A0J5</accession>
<accession>P21191</accession>
<keyword id="KW-1003">Cell membrane</keyword>
<keyword id="KW-0472">Membrane</keyword>
<keyword id="KW-0812">Transmembrane</keyword>
<keyword id="KW-1133">Transmembrane helix</keyword>
<keyword id="KW-0813">Transport</keyword>